<protein>
    <recommendedName>
        <fullName>Cochlin</fullName>
    </recommendedName>
    <alternativeName>
        <fullName>COCH-5B2</fullName>
    </alternativeName>
</protein>
<organism>
    <name type="scientific">Mus musculus</name>
    <name type="common">Mouse</name>
    <dbReference type="NCBI Taxonomy" id="10090"/>
    <lineage>
        <taxon>Eukaryota</taxon>
        <taxon>Metazoa</taxon>
        <taxon>Chordata</taxon>
        <taxon>Craniata</taxon>
        <taxon>Vertebrata</taxon>
        <taxon>Euteleostomi</taxon>
        <taxon>Mammalia</taxon>
        <taxon>Eutheria</taxon>
        <taxon>Euarchontoglires</taxon>
        <taxon>Glires</taxon>
        <taxon>Rodentia</taxon>
        <taxon>Myomorpha</taxon>
        <taxon>Muroidea</taxon>
        <taxon>Muridae</taxon>
        <taxon>Murinae</taxon>
        <taxon>Mus</taxon>
        <taxon>Mus</taxon>
    </lineage>
</organism>
<name>COCH_MOUSE</name>
<feature type="signal peptide" evidence="3">
    <location>
        <begin position="1"/>
        <end position="26"/>
    </location>
</feature>
<feature type="chain" id="PRO_0000020969" description="Cochlin">
    <location>
        <begin position="27"/>
        <end position="552"/>
    </location>
</feature>
<feature type="domain" description="LCCL" evidence="4">
    <location>
        <begin position="30"/>
        <end position="123"/>
    </location>
</feature>
<feature type="domain" description="VWFA 1" evidence="5">
    <location>
        <begin position="167"/>
        <end position="352"/>
    </location>
</feature>
<feature type="domain" description="VWFA 2" evidence="5">
    <location>
        <begin position="369"/>
        <end position="539"/>
    </location>
</feature>
<feature type="region of interest" description="Disordered" evidence="6">
    <location>
        <begin position="129"/>
        <end position="161"/>
    </location>
</feature>
<feature type="glycosylation site" description="N-linked (GlcNAc...) asparagine" evidence="3">
    <location>
        <position position="102"/>
    </location>
</feature>
<feature type="glycosylation site" description="N-linked (GlcNAc...) asparagine" evidence="3">
    <location>
        <position position="223"/>
    </location>
</feature>
<feature type="disulfide bond" evidence="4">
    <location>
        <begin position="36"/>
        <end position="52"/>
    </location>
</feature>
<feature type="disulfide bond" evidence="4">
    <location>
        <begin position="56"/>
        <end position="76"/>
    </location>
</feature>
<gene>
    <name type="primary">Coch</name>
</gene>
<comment type="function">
    <text evidence="1">Plays a role in the control of cell shape and motility in the trabecular meshwork.</text>
</comment>
<comment type="subunit">
    <text evidence="2">Monomer. May form homodimer. Interacts with type II collagen. Interacts with SLC44A2. Interacts with ANXA2.</text>
</comment>
<comment type="subcellular location">
    <subcellularLocation>
        <location evidence="2">Secreted</location>
        <location evidence="2">Extracellular space</location>
    </subcellularLocation>
</comment>
<comment type="tissue specificity">
    <text>Expressed in inner ear structures.</text>
</comment>
<comment type="PTM">
    <text evidence="2">N-glycosylated.</text>
</comment>
<comment type="online information" name="Protein Spotlight">
    <link uri="https://www.proteinspotlight.org/back_issues/004"/>
    <text>The Japanese Horseshoe Crab and Deafness - Issue 4 of November 2000</text>
</comment>
<sequence>MPSSRIPALCLGAWLLLLLLPRFARAEGAVPIPVTCFTRGLDIRKEKADVLCPGGCSLEEFSVFGNIVYASVSSICGAAVHRGVIGTSGGPVRVYSLPGRENYSSVDANGIQSQMLSRWSASFAVTKGKSSTQEATGRAVSTAHPPSGKRLKKTPEKKTGNKDCKADIAFLIDGSFNIGQRRFNLQKNFVGKVALMLGIGTEGPHVGLVQASEHPKIEFYLKNFTSAKDVLFAIKEVGFRGGNSNTGKALKHTAQKFFTADTGVRKGIPKVVVVFIDGWPSDDIEEAGIVAREFGVNVFIVSVAKPIPEELGMVQDVAFVDKAVCRNNGFFSYHMPNWFGTTKYVKPLVQKLCTHEQMMCSKTCYNSVNIAFLIDGSSSVGDSNFRLMLEFVSNIAKTFEISDIGAKIAAVQFTYDQRTEFSFTDYNTKENVLAVLANIRYMSGGTATGDAIAFTVRNVFGPIRDSPNKNFLVIVTDGQSYDDVRGPAAAAHDAGITIFSVGVAWAPLDDLRDMASKPKESHAFFTREFTGLEPIVSDVIRGICRDFLESQQ</sequence>
<dbReference type="EMBL" id="AF006741">
    <property type="protein sequence ID" value="AAC39949.1"/>
    <property type="molecule type" value="mRNA"/>
</dbReference>
<dbReference type="EMBL" id="AK028690">
    <property type="protein sequence ID" value="BAC26067.1"/>
    <property type="molecule type" value="mRNA"/>
</dbReference>
<dbReference type="EMBL" id="AK137336">
    <property type="protein sequence ID" value="BAE23310.1"/>
    <property type="molecule type" value="mRNA"/>
</dbReference>
<dbReference type="EMBL" id="AK171875">
    <property type="protein sequence ID" value="BAE42713.1"/>
    <property type="molecule type" value="mRNA"/>
</dbReference>
<dbReference type="EMBL" id="BC045137">
    <property type="protein sequence ID" value="AAH45137.1"/>
    <property type="molecule type" value="mRNA"/>
</dbReference>
<dbReference type="EMBL" id="Z78163">
    <property type="protein sequence ID" value="CAB01565.1"/>
    <property type="molecule type" value="mRNA"/>
</dbReference>
<dbReference type="CCDS" id="CCDS25901.1"/>
<dbReference type="RefSeq" id="NP_001185764.1">
    <property type="nucleotide sequence ID" value="NM_001198835.2"/>
</dbReference>
<dbReference type="RefSeq" id="NP_031754.1">
    <property type="nucleotide sequence ID" value="NM_007728.6"/>
</dbReference>
<dbReference type="SMR" id="Q62507"/>
<dbReference type="BioGRID" id="198801">
    <property type="interactions" value="1"/>
</dbReference>
<dbReference type="FunCoup" id="Q62507">
    <property type="interactions" value="119"/>
</dbReference>
<dbReference type="STRING" id="10090.ENSMUSP00000128127"/>
<dbReference type="GlyCosmos" id="Q62507">
    <property type="glycosylation" value="2 sites, No reported glycans"/>
</dbReference>
<dbReference type="GlyGen" id="Q62507">
    <property type="glycosylation" value="3 sites, 2 N-linked glycans (2 sites), 1 O-linked glycan (1 site)"/>
</dbReference>
<dbReference type="iPTMnet" id="Q62507"/>
<dbReference type="PhosphoSitePlus" id="Q62507"/>
<dbReference type="jPOST" id="Q62507"/>
<dbReference type="PaxDb" id="10090-ENSMUSP00000128127"/>
<dbReference type="ProteomicsDB" id="283785"/>
<dbReference type="Antibodypedia" id="22996">
    <property type="antibodies" value="216 antibodies from 29 providers"/>
</dbReference>
<dbReference type="DNASU" id="12810"/>
<dbReference type="Ensembl" id="ENSMUST00000085412.7">
    <property type="protein sequence ID" value="ENSMUSP00000082533.6"/>
    <property type="gene ID" value="ENSMUSG00000020953.18"/>
</dbReference>
<dbReference type="Ensembl" id="ENSMUST00000164782.10">
    <property type="protein sequence ID" value="ENSMUSP00000128127.3"/>
    <property type="gene ID" value="ENSMUSG00000020953.18"/>
</dbReference>
<dbReference type="GeneID" id="12810"/>
<dbReference type="KEGG" id="mmu:12810"/>
<dbReference type="UCSC" id="uc007nmr.2">
    <property type="organism name" value="mouse"/>
</dbReference>
<dbReference type="AGR" id="MGI:1278313"/>
<dbReference type="CTD" id="1690"/>
<dbReference type="MGI" id="MGI:1278313">
    <property type="gene designation" value="Coch"/>
</dbReference>
<dbReference type="VEuPathDB" id="HostDB:ENSMUSG00000020953"/>
<dbReference type="eggNOG" id="KOG1216">
    <property type="taxonomic scope" value="Eukaryota"/>
</dbReference>
<dbReference type="GeneTree" id="ENSGT00940000159386"/>
<dbReference type="HOGENOM" id="CLU_019512_1_0_1"/>
<dbReference type="InParanoid" id="Q62507"/>
<dbReference type="OMA" id="NFHLMLG"/>
<dbReference type="OrthoDB" id="441660at2759"/>
<dbReference type="PhylomeDB" id="Q62507"/>
<dbReference type="TreeFam" id="TF318242"/>
<dbReference type="BioGRID-ORCS" id="12810">
    <property type="hits" value="5 hits in 78 CRISPR screens"/>
</dbReference>
<dbReference type="ChiTaRS" id="Coch">
    <property type="organism name" value="mouse"/>
</dbReference>
<dbReference type="PRO" id="PR:Q62507"/>
<dbReference type="Proteomes" id="UP000000589">
    <property type="component" value="Chromosome 12"/>
</dbReference>
<dbReference type="RNAct" id="Q62507">
    <property type="molecule type" value="protein"/>
</dbReference>
<dbReference type="Bgee" id="ENSMUSG00000020953">
    <property type="expression patterns" value="Expressed in utricle of membranous labyrinth and 132 other cell types or tissues"/>
</dbReference>
<dbReference type="GO" id="GO:0031012">
    <property type="term" value="C:extracellular matrix"/>
    <property type="evidence" value="ECO:0000314"/>
    <property type="project" value="MGI"/>
</dbReference>
<dbReference type="GO" id="GO:0005576">
    <property type="term" value="C:extracellular region"/>
    <property type="evidence" value="ECO:0000315"/>
    <property type="project" value="MGI"/>
</dbReference>
<dbReference type="GO" id="GO:0005518">
    <property type="term" value="F:collagen binding"/>
    <property type="evidence" value="ECO:0000250"/>
    <property type="project" value="UniProtKB"/>
</dbReference>
<dbReference type="GO" id="GO:0008360">
    <property type="term" value="P:regulation of cell shape"/>
    <property type="evidence" value="ECO:0000250"/>
    <property type="project" value="UniProtKB"/>
</dbReference>
<dbReference type="GO" id="GO:0007605">
    <property type="term" value="P:sensory perception of sound"/>
    <property type="evidence" value="ECO:0000315"/>
    <property type="project" value="MGI"/>
</dbReference>
<dbReference type="CDD" id="cd01472">
    <property type="entry name" value="vWA_collagen"/>
    <property type="match status" value="1"/>
</dbReference>
<dbReference type="CDD" id="cd01482">
    <property type="entry name" value="vWA_collagen_alphaI-XII-like"/>
    <property type="match status" value="1"/>
</dbReference>
<dbReference type="FunFam" id="3.40.50.410:FF:000029">
    <property type="entry name" value="Cochlin"/>
    <property type="match status" value="1"/>
</dbReference>
<dbReference type="FunFam" id="2.170.130.20:FF:000001">
    <property type="entry name" value="Cysteine-rich secretory protein LCCL domain-containing 1"/>
    <property type="match status" value="1"/>
</dbReference>
<dbReference type="FunFam" id="3.40.50.410:FF:000009">
    <property type="entry name" value="Putative vitrin"/>
    <property type="match status" value="1"/>
</dbReference>
<dbReference type="Gene3D" id="2.170.130.20">
    <property type="entry name" value="LCCL-like domain"/>
    <property type="match status" value="1"/>
</dbReference>
<dbReference type="Gene3D" id="3.40.50.410">
    <property type="entry name" value="von Willebrand factor, type A domain"/>
    <property type="match status" value="2"/>
</dbReference>
<dbReference type="InterPro" id="IPR050525">
    <property type="entry name" value="ECM_Assembly_Org"/>
</dbReference>
<dbReference type="InterPro" id="IPR004043">
    <property type="entry name" value="LCCL"/>
</dbReference>
<dbReference type="InterPro" id="IPR036609">
    <property type="entry name" value="LCCL_sf"/>
</dbReference>
<dbReference type="InterPro" id="IPR002035">
    <property type="entry name" value="VWF_A"/>
</dbReference>
<dbReference type="InterPro" id="IPR036465">
    <property type="entry name" value="vWFA_dom_sf"/>
</dbReference>
<dbReference type="PANTHER" id="PTHR24020:SF36">
    <property type="entry name" value="COCHLIN"/>
    <property type="match status" value="1"/>
</dbReference>
<dbReference type="PANTHER" id="PTHR24020">
    <property type="entry name" value="COLLAGEN ALPHA"/>
    <property type="match status" value="1"/>
</dbReference>
<dbReference type="Pfam" id="PF03815">
    <property type="entry name" value="LCCL"/>
    <property type="match status" value="1"/>
</dbReference>
<dbReference type="Pfam" id="PF00092">
    <property type="entry name" value="VWA"/>
    <property type="match status" value="2"/>
</dbReference>
<dbReference type="PRINTS" id="PR00453">
    <property type="entry name" value="VWFADOMAIN"/>
</dbReference>
<dbReference type="SMART" id="SM00603">
    <property type="entry name" value="LCCL"/>
    <property type="match status" value="1"/>
</dbReference>
<dbReference type="SMART" id="SM00327">
    <property type="entry name" value="VWA"/>
    <property type="match status" value="2"/>
</dbReference>
<dbReference type="SUPFAM" id="SSF69848">
    <property type="entry name" value="LCCL domain"/>
    <property type="match status" value="1"/>
</dbReference>
<dbReference type="SUPFAM" id="SSF53300">
    <property type="entry name" value="vWA-like"/>
    <property type="match status" value="2"/>
</dbReference>
<dbReference type="PROSITE" id="PS50820">
    <property type="entry name" value="LCCL"/>
    <property type="match status" value="1"/>
</dbReference>
<dbReference type="PROSITE" id="PS50234">
    <property type="entry name" value="VWFA"/>
    <property type="match status" value="2"/>
</dbReference>
<accession>Q62507</accession>
<accession>Q3TAF5</accession>
<accession>Q9QWK6</accession>
<reference key="1">
    <citation type="journal article" date="1997" name="Genomics">
        <title>Mapping and characterization of a novel cochlear gene in human and in mouse: a positional candidate gene for a deafness disorder, DFNA9.</title>
        <authorList>
            <person name="Robertson N.G."/>
            <person name="Skvorak A.B."/>
            <person name="Yin Y."/>
            <person name="Weremowicz S."/>
            <person name="Johnson K.R."/>
            <person name="Kovatch K.A."/>
            <person name="Battey J.F."/>
            <person name="Bieber F.R."/>
            <person name="Morton C.C."/>
        </authorList>
    </citation>
    <scope>NUCLEOTIDE SEQUENCE [MRNA]</scope>
    <source>
        <tissue>Cochlea</tissue>
    </source>
</reference>
<reference key="2">
    <citation type="journal article" date="2005" name="Science">
        <title>The transcriptional landscape of the mammalian genome.</title>
        <authorList>
            <person name="Carninci P."/>
            <person name="Kasukawa T."/>
            <person name="Katayama S."/>
            <person name="Gough J."/>
            <person name="Frith M.C."/>
            <person name="Maeda N."/>
            <person name="Oyama R."/>
            <person name="Ravasi T."/>
            <person name="Lenhard B."/>
            <person name="Wells C."/>
            <person name="Kodzius R."/>
            <person name="Shimokawa K."/>
            <person name="Bajic V.B."/>
            <person name="Brenner S.E."/>
            <person name="Batalov S."/>
            <person name="Forrest A.R."/>
            <person name="Zavolan M."/>
            <person name="Davis M.J."/>
            <person name="Wilming L.G."/>
            <person name="Aidinis V."/>
            <person name="Allen J.E."/>
            <person name="Ambesi-Impiombato A."/>
            <person name="Apweiler R."/>
            <person name="Aturaliya R.N."/>
            <person name="Bailey T.L."/>
            <person name="Bansal M."/>
            <person name="Baxter L."/>
            <person name="Beisel K.W."/>
            <person name="Bersano T."/>
            <person name="Bono H."/>
            <person name="Chalk A.M."/>
            <person name="Chiu K.P."/>
            <person name="Choudhary V."/>
            <person name="Christoffels A."/>
            <person name="Clutterbuck D.R."/>
            <person name="Crowe M.L."/>
            <person name="Dalla E."/>
            <person name="Dalrymple B.P."/>
            <person name="de Bono B."/>
            <person name="Della Gatta G."/>
            <person name="di Bernardo D."/>
            <person name="Down T."/>
            <person name="Engstrom P."/>
            <person name="Fagiolini M."/>
            <person name="Faulkner G."/>
            <person name="Fletcher C.F."/>
            <person name="Fukushima T."/>
            <person name="Furuno M."/>
            <person name="Futaki S."/>
            <person name="Gariboldi M."/>
            <person name="Georgii-Hemming P."/>
            <person name="Gingeras T.R."/>
            <person name="Gojobori T."/>
            <person name="Green R.E."/>
            <person name="Gustincich S."/>
            <person name="Harbers M."/>
            <person name="Hayashi Y."/>
            <person name="Hensch T.K."/>
            <person name="Hirokawa N."/>
            <person name="Hill D."/>
            <person name="Huminiecki L."/>
            <person name="Iacono M."/>
            <person name="Ikeo K."/>
            <person name="Iwama A."/>
            <person name="Ishikawa T."/>
            <person name="Jakt M."/>
            <person name="Kanapin A."/>
            <person name="Katoh M."/>
            <person name="Kawasawa Y."/>
            <person name="Kelso J."/>
            <person name="Kitamura H."/>
            <person name="Kitano H."/>
            <person name="Kollias G."/>
            <person name="Krishnan S.P."/>
            <person name="Kruger A."/>
            <person name="Kummerfeld S.K."/>
            <person name="Kurochkin I.V."/>
            <person name="Lareau L.F."/>
            <person name="Lazarevic D."/>
            <person name="Lipovich L."/>
            <person name="Liu J."/>
            <person name="Liuni S."/>
            <person name="McWilliam S."/>
            <person name="Madan Babu M."/>
            <person name="Madera M."/>
            <person name="Marchionni L."/>
            <person name="Matsuda H."/>
            <person name="Matsuzawa S."/>
            <person name="Miki H."/>
            <person name="Mignone F."/>
            <person name="Miyake S."/>
            <person name="Morris K."/>
            <person name="Mottagui-Tabar S."/>
            <person name="Mulder N."/>
            <person name="Nakano N."/>
            <person name="Nakauchi H."/>
            <person name="Ng P."/>
            <person name="Nilsson R."/>
            <person name="Nishiguchi S."/>
            <person name="Nishikawa S."/>
            <person name="Nori F."/>
            <person name="Ohara O."/>
            <person name="Okazaki Y."/>
            <person name="Orlando V."/>
            <person name="Pang K.C."/>
            <person name="Pavan W.J."/>
            <person name="Pavesi G."/>
            <person name="Pesole G."/>
            <person name="Petrovsky N."/>
            <person name="Piazza S."/>
            <person name="Reed J."/>
            <person name="Reid J.F."/>
            <person name="Ring B.Z."/>
            <person name="Ringwald M."/>
            <person name="Rost B."/>
            <person name="Ruan Y."/>
            <person name="Salzberg S.L."/>
            <person name="Sandelin A."/>
            <person name="Schneider C."/>
            <person name="Schoenbach C."/>
            <person name="Sekiguchi K."/>
            <person name="Semple C.A."/>
            <person name="Seno S."/>
            <person name="Sessa L."/>
            <person name="Sheng Y."/>
            <person name="Shibata Y."/>
            <person name="Shimada H."/>
            <person name="Shimada K."/>
            <person name="Silva D."/>
            <person name="Sinclair B."/>
            <person name="Sperling S."/>
            <person name="Stupka E."/>
            <person name="Sugiura K."/>
            <person name="Sultana R."/>
            <person name="Takenaka Y."/>
            <person name="Taki K."/>
            <person name="Tammoja K."/>
            <person name="Tan S.L."/>
            <person name="Tang S."/>
            <person name="Taylor M.S."/>
            <person name="Tegner J."/>
            <person name="Teichmann S.A."/>
            <person name="Ueda H.R."/>
            <person name="van Nimwegen E."/>
            <person name="Verardo R."/>
            <person name="Wei C.L."/>
            <person name="Yagi K."/>
            <person name="Yamanishi H."/>
            <person name="Zabarovsky E."/>
            <person name="Zhu S."/>
            <person name="Zimmer A."/>
            <person name="Hide W."/>
            <person name="Bult C."/>
            <person name="Grimmond S.M."/>
            <person name="Teasdale R.D."/>
            <person name="Liu E.T."/>
            <person name="Brusic V."/>
            <person name="Quackenbush J."/>
            <person name="Wahlestedt C."/>
            <person name="Mattick J.S."/>
            <person name="Hume D.A."/>
            <person name="Kai C."/>
            <person name="Sasaki D."/>
            <person name="Tomaru Y."/>
            <person name="Fukuda S."/>
            <person name="Kanamori-Katayama M."/>
            <person name="Suzuki M."/>
            <person name="Aoki J."/>
            <person name="Arakawa T."/>
            <person name="Iida J."/>
            <person name="Imamura K."/>
            <person name="Itoh M."/>
            <person name="Kato T."/>
            <person name="Kawaji H."/>
            <person name="Kawagashira N."/>
            <person name="Kawashima T."/>
            <person name="Kojima M."/>
            <person name="Kondo S."/>
            <person name="Konno H."/>
            <person name="Nakano K."/>
            <person name="Ninomiya N."/>
            <person name="Nishio T."/>
            <person name="Okada M."/>
            <person name="Plessy C."/>
            <person name="Shibata K."/>
            <person name="Shiraki T."/>
            <person name="Suzuki S."/>
            <person name="Tagami M."/>
            <person name="Waki K."/>
            <person name="Watahiki A."/>
            <person name="Okamura-Oho Y."/>
            <person name="Suzuki H."/>
            <person name="Kawai J."/>
            <person name="Hayashizaki Y."/>
        </authorList>
    </citation>
    <scope>NUCLEOTIDE SEQUENCE [LARGE SCALE MRNA]</scope>
    <source>
        <strain>C57BL/6J</strain>
        <tissue>Cerebellum</tissue>
        <tissue>Skin</tissue>
    </source>
</reference>
<reference key="3">
    <citation type="journal article" date="2004" name="Genome Res.">
        <title>The status, quality, and expansion of the NIH full-length cDNA project: the Mammalian Gene Collection (MGC).</title>
        <authorList>
            <consortium name="The MGC Project Team"/>
        </authorList>
    </citation>
    <scope>NUCLEOTIDE SEQUENCE [LARGE SCALE MRNA]</scope>
    <source>
        <tissue>Olfactory epithelium</tissue>
    </source>
</reference>
<reference key="4">
    <citation type="journal article" date="1997" name="Genomics">
        <title>Cloning of the genes encoding two murine and human cochlear unconventional type I myosins.</title>
        <authorList>
            <person name="Crozet F."/>
            <person name="El-Amraoui A."/>
            <person name="Blanchard S."/>
            <person name="Lenoir M."/>
            <person name="Ripoll C."/>
            <person name="Vago P."/>
            <person name="Hamel C."/>
            <person name="Fizames C."/>
            <person name="Levi-Acobas F."/>
            <person name="Depetris D."/>
            <person name="Mattei M.-G."/>
            <person name="Weil D."/>
            <person name="Pujol R."/>
            <person name="Petit C."/>
        </authorList>
    </citation>
    <scope>NUCLEOTIDE SEQUENCE [MRNA] OF 324-417</scope>
    <source>
        <tissue>Cochlea</tissue>
    </source>
</reference>
<reference key="5">
    <citation type="journal article" date="2010" name="Cell">
        <title>A tissue-specific atlas of mouse protein phosphorylation and expression.</title>
        <authorList>
            <person name="Huttlin E.L."/>
            <person name="Jedrychowski M.P."/>
            <person name="Elias J.E."/>
            <person name="Goswami T."/>
            <person name="Rad R."/>
            <person name="Beausoleil S.A."/>
            <person name="Villen J."/>
            <person name="Haas W."/>
            <person name="Sowa M.E."/>
            <person name="Gygi S.P."/>
        </authorList>
    </citation>
    <scope>IDENTIFICATION BY MASS SPECTROMETRY [LARGE SCALE ANALYSIS]</scope>
    <source>
        <tissue>Spleen</tissue>
    </source>
</reference>
<evidence type="ECO:0000250" key="1"/>
<evidence type="ECO:0000250" key="2">
    <source>
        <dbReference type="UniProtKB" id="O43405"/>
    </source>
</evidence>
<evidence type="ECO:0000255" key="3"/>
<evidence type="ECO:0000255" key="4">
    <source>
        <dbReference type="PROSITE-ProRule" id="PRU00123"/>
    </source>
</evidence>
<evidence type="ECO:0000255" key="5">
    <source>
        <dbReference type="PROSITE-ProRule" id="PRU00219"/>
    </source>
</evidence>
<evidence type="ECO:0000256" key="6">
    <source>
        <dbReference type="SAM" id="MobiDB-lite"/>
    </source>
</evidence>
<keyword id="KW-1015">Disulfide bond</keyword>
<keyword id="KW-0325">Glycoprotein</keyword>
<keyword id="KW-1009">Hearing</keyword>
<keyword id="KW-1185">Reference proteome</keyword>
<keyword id="KW-0677">Repeat</keyword>
<keyword id="KW-0964">Secreted</keyword>
<keyword id="KW-0732">Signal</keyword>
<proteinExistence type="evidence at protein level"/>